<reference key="1">
    <citation type="journal article" date="2002" name="Nature">
        <title>Sequence and analysis of chromosome 2 of Dictyostelium discoideum.</title>
        <authorList>
            <person name="Gloeckner G."/>
            <person name="Eichinger L."/>
            <person name="Szafranski K."/>
            <person name="Pachebat J.A."/>
            <person name="Bankier A.T."/>
            <person name="Dear P.H."/>
            <person name="Lehmann R."/>
            <person name="Baumgart C."/>
            <person name="Parra G."/>
            <person name="Abril J.F."/>
            <person name="Guigo R."/>
            <person name="Kumpf K."/>
            <person name="Tunggal B."/>
            <person name="Cox E.C."/>
            <person name="Quail M.A."/>
            <person name="Platzer M."/>
            <person name="Rosenthal A."/>
            <person name="Noegel A.A."/>
        </authorList>
    </citation>
    <scope>NUCLEOTIDE SEQUENCE [LARGE SCALE GENOMIC DNA]</scope>
    <source>
        <strain>AX4</strain>
    </source>
</reference>
<reference key="2">
    <citation type="journal article" date="2005" name="Nature">
        <title>The genome of the social amoeba Dictyostelium discoideum.</title>
        <authorList>
            <person name="Eichinger L."/>
            <person name="Pachebat J.A."/>
            <person name="Gloeckner G."/>
            <person name="Rajandream M.A."/>
            <person name="Sucgang R."/>
            <person name="Berriman M."/>
            <person name="Song J."/>
            <person name="Olsen R."/>
            <person name="Szafranski K."/>
            <person name="Xu Q."/>
            <person name="Tunggal B."/>
            <person name="Kummerfeld S."/>
            <person name="Madera M."/>
            <person name="Konfortov B.A."/>
            <person name="Rivero F."/>
            <person name="Bankier A.T."/>
            <person name="Lehmann R."/>
            <person name="Hamlin N."/>
            <person name="Davies R."/>
            <person name="Gaudet P."/>
            <person name="Fey P."/>
            <person name="Pilcher K."/>
            <person name="Chen G."/>
            <person name="Saunders D."/>
            <person name="Sodergren E.J."/>
            <person name="Davis P."/>
            <person name="Kerhornou A."/>
            <person name="Nie X."/>
            <person name="Hall N."/>
            <person name="Anjard C."/>
            <person name="Hemphill L."/>
            <person name="Bason N."/>
            <person name="Farbrother P."/>
            <person name="Desany B."/>
            <person name="Just E."/>
            <person name="Morio T."/>
            <person name="Rost R."/>
            <person name="Churcher C.M."/>
            <person name="Cooper J."/>
            <person name="Haydock S."/>
            <person name="van Driessche N."/>
            <person name="Cronin A."/>
            <person name="Goodhead I."/>
            <person name="Muzny D.M."/>
            <person name="Mourier T."/>
            <person name="Pain A."/>
            <person name="Lu M."/>
            <person name="Harper D."/>
            <person name="Lindsay R."/>
            <person name="Hauser H."/>
            <person name="James K.D."/>
            <person name="Quiles M."/>
            <person name="Madan Babu M."/>
            <person name="Saito T."/>
            <person name="Buchrieser C."/>
            <person name="Wardroper A."/>
            <person name="Felder M."/>
            <person name="Thangavelu M."/>
            <person name="Johnson D."/>
            <person name="Knights A."/>
            <person name="Loulseged H."/>
            <person name="Mungall K.L."/>
            <person name="Oliver K."/>
            <person name="Price C."/>
            <person name="Quail M.A."/>
            <person name="Urushihara H."/>
            <person name="Hernandez J."/>
            <person name="Rabbinowitsch E."/>
            <person name="Steffen D."/>
            <person name="Sanders M."/>
            <person name="Ma J."/>
            <person name="Kohara Y."/>
            <person name="Sharp S."/>
            <person name="Simmonds M.N."/>
            <person name="Spiegler S."/>
            <person name="Tivey A."/>
            <person name="Sugano S."/>
            <person name="White B."/>
            <person name="Walker D."/>
            <person name="Woodward J.R."/>
            <person name="Winckler T."/>
            <person name="Tanaka Y."/>
            <person name="Shaulsky G."/>
            <person name="Schleicher M."/>
            <person name="Weinstock G.M."/>
            <person name="Rosenthal A."/>
            <person name="Cox E.C."/>
            <person name="Chisholm R.L."/>
            <person name="Gibbs R.A."/>
            <person name="Loomis W.F."/>
            <person name="Platzer M."/>
            <person name="Kay R.R."/>
            <person name="Williams J.G."/>
            <person name="Dear P.H."/>
            <person name="Noegel A.A."/>
            <person name="Barrell B.G."/>
            <person name="Kuspa A."/>
        </authorList>
    </citation>
    <scope>NUCLEOTIDE SEQUENCE [LARGE SCALE GENOMIC DNA]</scope>
    <source>
        <strain>AX4</strain>
    </source>
</reference>
<reference key="3">
    <citation type="journal article" date="2007" name="Bioinformatics">
        <title>Polyketide synthase genes and the natural products potential of Dictyostelium discoideum.</title>
        <authorList>
            <person name="Zucko J."/>
            <person name="Skunca N."/>
            <person name="Curk T."/>
            <person name="Zupan B."/>
            <person name="Long P.F."/>
            <person name="Cullum J."/>
            <person name="Kessin R.H."/>
            <person name="Hranueli D."/>
        </authorList>
    </citation>
    <scope>IDENTIFICATION</scope>
</reference>
<protein>
    <recommendedName>
        <fullName>Probable polyketide synthase 6</fullName>
        <shortName>dipks6</shortName>
        <ecNumber>2.3.1.-</ecNumber>
    </recommendedName>
</protein>
<proteinExistence type="inferred from homology"/>
<keyword id="KW-0472">Membrane</keyword>
<keyword id="KW-0596">Phosphopantetheine</keyword>
<keyword id="KW-0597">Phosphoprotein</keyword>
<keyword id="KW-1185">Reference proteome</keyword>
<keyword id="KW-0808">Transferase</keyword>
<keyword id="KW-0812">Transmembrane</keyword>
<keyword id="KW-1133">Transmembrane helix</keyword>
<name>PKS6_DICDI</name>
<organism>
    <name type="scientific">Dictyostelium discoideum</name>
    <name type="common">Social amoeba</name>
    <dbReference type="NCBI Taxonomy" id="44689"/>
    <lineage>
        <taxon>Eukaryota</taxon>
        <taxon>Amoebozoa</taxon>
        <taxon>Evosea</taxon>
        <taxon>Eumycetozoa</taxon>
        <taxon>Dictyostelia</taxon>
        <taxon>Dictyosteliales</taxon>
        <taxon>Dictyosteliaceae</taxon>
        <taxon>Dictyostelium</taxon>
    </lineage>
</organism>
<feature type="chain" id="PRO_0000376881" description="Probable polyketide synthase 6">
    <location>
        <begin position="1"/>
        <end position="2924"/>
    </location>
</feature>
<feature type="transmembrane region" description="Helical" evidence="2">
    <location>
        <begin position="2551"/>
        <end position="2571"/>
    </location>
</feature>
<feature type="domain" description="Ketosynthase family 3 (KS3)" evidence="4">
    <location>
        <begin position="11"/>
        <end position="442"/>
    </location>
</feature>
<feature type="domain" description="PKS/mFAS DH" evidence="5">
    <location>
        <begin position="925"/>
        <end position="1210"/>
    </location>
</feature>
<feature type="domain" description="Carrier" evidence="3">
    <location>
        <begin position="2431"/>
        <end position="2508"/>
    </location>
</feature>
<feature type="region of interest" description="Acyl/malonyl transferase">
    <location>
        <begin position="635"/>
        <end position="668"/>
    </location>
</feature>
<feature type="region of interest" description="N-terminal hotdog fold" evidence="5">
    <location>
        <begin position="925"/>
        <end position="1047"/>
    </location>
</feature>
<feature type="region of interest" description="C-terminal hotdog fold" evidence="5">
    <location>
        <begin position="1064"/>
        <end position="1210"/>
    </location>
</feature>
<feature type="active site" description="For beta-ketoacyl synthase activity" evidence="4">
    <location>
        <position position="181"/>
    </location>
</feature>
<feature type="active site" description="For beta-ketoacyl synthase activity" evidence="4">
    <location>
        <position position="323"/>
    </location>
</feature>
<feature type="active site" description="For beta-ketoacyl synthase activity" evidence="4">
    <location>
        <position position="362"/>
    </location>
</feature>
<feature type="active site" description="For acyl/malonyl transferase activity" evidence="6">
    <location>
        <position position="645"/>
    </location>
</feature>
<feature type="active site" description="Proton acceptor; for dehydratase activity" evidence="5">
    <location>
        <position position="959"/>
    </location>
</feature>
<feature type="active site" description="Proton donor; for dehydratase activity" evidence="5">
    <location>
        <position position="1122"/>
    </location>
</feature>
<feature type="modified residue" description="O-(pantetheine 4'-phosphoryl)serine" evidence="3">
    <location>
        <position position="2468"/>
    </location>
</feature>
<evidence type="ECO:0000250" key="1"/>
<evidence type="ECO:0000255" key="2"/>
<evidence type="ECO:0000255" key="3">
    <source>
        <dbReference type="PROSITE-ProRule" id="PRU00258"/>
    </source>
</evidence>
<evidence type="ECO:0000255" key="4">
    <source>
        <dbReference type="PROSITE-ProRule" id="PRU01348"/>
    </source>
</evidence>
<evidence type="ECO:0000255" key="5">
    <source>
        <dbReference type="PROSITE-ProRule" id="PRU01363"/>
    </source>
</evidence>
<evidence type="ECO:0000255" key="6">
    <source>
        <dbReference type="PROSITE-ProRule" id="PRU10022"/>
    </source>
</evidence>
<evidence type="ECO:0000305" key="7"/>
<sequence length="2924" mass="332524">MNNLKNIDLIEKGVAIVGIGFRIPSGNNENSICSPDDLFNNLKNGFDGVSSTSERWSDNYHKLGEISSPNAGLLPLNEWKSFDPLFFGINPSEASLIDPQQRLLLKCTWEALEDASIDPISIRGTNTSVFIGASNIDYQHTNKHQDSVLKNAIAQSTCAISNRISYCFDFNGPSLSIDTACSSSLNAVSQGYHSILNGTSDISIVGGVNLILDVEMTKAYSYLSMLSKTHGKCKAFDESGDGFTRGECVGVVVLKNLQDAIKDGNRIYCVINGSSSNVDGNGNMDKVNFYSPSKQSQFNNINSAFKSTNDKLSINDIQYIEAHGTGTKTGDPIETEAISMAFKNRDKSAPILIGSIKSNIGHCEAGSGVASLIKCCLMFKYQCFLPNIHFKNPNPLIKFNEWNLKVVTSPIPFNKRNNEKPVSMMINNFGVTGSNCCLLISEFKNNNNFKENINLESQSVNDRVLIPFSANSSNSLNQYQSKFKNIINNQFNFIDFTAIQIYSKSNYLYQRSVVIASNSNELFENISNKKQIQTKNSIISNMSFKGKNPITIFVFSGQGSQYPKMALELYNNEVIFKKSIDLIDSKLSKYYGFSVWEKVKTIKDDDLTSIHDPIFAQPALCMISVSLFELYYHWGVNPSFILGHSLGEISASYCSGMIDLDTFCYTVYQRSIAQSKTNGCGRMLSINISDEEFKSMYSQKYPQIEIACYNSPQSIVVAGNESILNEISKELKEKEIFTAMLGSLSSFHTSSQQSTKDSILQLNIESNQPKVPIFSTVTTNLFNESNRFNSQYVYDNIIKPVKFTQTISNIYKHIESNQLDNDIVFIEIAPHPTLSFYIKQMVPSSLNESVSVYSALHKKKNDVEEFQQTISNLYCQNGYNINFKCQFNNKKSNLNIELPLYQWSDELYFAQNQVLEQHRKGGPPIDHLGLSNSYYSPFKNSYKTLIDINYKPFQYLKGHMVKGKYYFPGCGYIDNIIQLYKNQDIFISFIEFKTPLILIEGINQYLQTNIQQTGKSEYRAQFHFKDHKSNEWIQSSNSNFQLLDHGNDIPSNYNIKEIIKNKCNLSKLTKNELYKNIKSKTGLNYTGVFQGVTECYIGDNCTLSVVSLESQTNSFLNIPILDTCLHGMLILINDQCQIVFDKAIGFKYYSSNIPADFKENKDSFYVYSNLRPRVGGDSYHGTIIVMLSDGSVLYEIEEVVCKSLIPIKDSLKIEYPNDELYKVHLQSKDSPIPTPSSFKSIIYENDFFQSSLNIPEDLFKYISTLFYKDIIKRCPEININKINSHSVNEIISSFSKISKHERLFRFVFETIKENGILNSFEEKDDTYFEFNKVIIKSSRIISKLLFPLENDNDNEDLPQSLFQNGLMDKIYKCSYLRKKNQVISHVIKHSIKEIINNNIIIRILEFGGGTASLSVEVIEEIVTLLQENPNYQVEIEYTWSDISPAFIADAKNKINKIINDAAITNGLNVIYHPLTIGESLIETQSIKPSYYDFVIMSNVLHVVKDIKQAVEQMYQLLTTNGQLVFLEPPYKSVLNDSIVGSFEQWWSFTDTDIRKDRCGMPQQSWYQLLNSCNFKDIVMSKECIFFGSVIQAQKPPISLLNSQPKYDNIIIYGGSINSSFVENIKLDSNSKSLFQIETIQEFNKLISKSTITNDSIVYFIKTLETLSLDNFKQITLEYIEINQKLLQINSLCKHVLIVSDSRKTNYLASSAIGAARYFDEFPLLKLHTLDFDYDSTQNYINSKNNKMVQFINILTDSKTNVHKEMIIINNKVYYEIVQKEKNLKLKYNSESFENQNNLMCSLSPNLEYQLQSKQIKLRDNQVEVKTIATGINYKDYLNFSGSNSNGDDNTGLPQFGYEFSGIITRVGNNVKDYKVGDNVFGLSNSCTSSHIVTNFKKIQIKPSKISHIEASSIPIDYLTSFMSLFNVGSLNIEDNESILIHLGRDGFGLSTFEILKWKGFKSNLFVTVNSDKTKQYLLKKYGDLITGIYSNTDKSYVAEIKNKLIKLGSKKKGVDLILNTLPSDFMDSNFKLLTKYGRIIDLNSNHLNQSEFLKNINFKYNHGYHNFELSLFQKNKILKCLNEISNAIENGELKTIPIKEFTNLNIKDAIKYITNGNIEKITVSHDHEIYSDIIYRYLDEKEFSILKSNYQINSNNLGKNILITGQSGIILEILKWIIKYSNINTIENVIILSRSSLKWELELLINQTKLSNNNIKFHFKSVDVGDSEQVDNAINDILNENQQIRNIDSIFHFAFQQIACKVQEINMKHLNISHGAKSMGAINLHNQSIKRNWKLINFVMASSALSFIDSTDQCTYACANTLLDSFSKYRVSLGLPSTCINLGLIESTGFVSKNESISVFLDGNGIIPTPINRVLGLLDLQIQNASKFTNSMISNFKPSKFKNNQQISLFLKFDYLMNLKNNSEQTKKENTGNKNIDELFIEKVSELFSMDESKINKNLRLIDYGADSLIIVQLKNWIDKEIGINLITIQQLQNNTINISIKMILNSLMKNNQNKYLPSNRIDYWKNEMKFEESIKPIPNEIRSRNNNSGKIILLTGTTGFLGGFLLFNMLRLDSCKLIYCLIRNKSKSSYPLDEIINNLKYHQLYEKLNKSQISKIIPIIGDLSMNKLGLSNDDYETISKNVNLIINPGADINQKSSYQDCKLVNVNGVKEIIKLSLSSLKQRIPIVNFSSFSVFFNQSLDKNFDESVLPSIDNIDNLPTEYMKSKVVGEYILLEASKNYNIPSILIRPPSIFLNPETGIGHSSDLTLLMIQSCYELGYCPNQILNGFILINTITWLSNNITNIIMNDNCWTNSKMNIYNVHGKQIQSSLIIKPLEKHFNCKQINNNDWIDMVNNSNKKSCIKLKSFHSLENIFKSENKGYKSNESQSISLSTKSLLESMGSYNTDLKITDKMIISHIKHIFK</sequence>
<accession>B0G0Z9</accession>
<accession>Q86AE8</accession>
<dbReference type="EC" id="2.3.1.-"/>
<dbReference type="EMBL" id="AAFI02000006">
    <property type="protein sequence ID" value="EDR41104.1"/>
    <property type="molecule type" value="Genomic_DNA"/>
</dbReference>
<dbReference type="RefSeq" id="XP_001732962.1">
    <property type="nucleotide sequence ID" value="XM_001732910.1"/>
</dbReference>
<dbReference type="SMR" id="B0G0Z9"/>
<dbReference type="FunCoup" id="B0G0Z9">
    <property type="interactions" value="4"/>
</dbReference>
<dbReference type="STRING" id="44689.B0G0Z9"/>
<dbReference type="GlyGen" id="B0G0Z9">
    <property type="glycosylation" value="1 site"/>
</dbReference>
<dbReference type="PaxDb" id="44689-DDB0235162"/>
<dbReference type="EnsemblProtists" id="EDR41104">
    <property type="protein sequence ID" value="EDR41104"/>
    <property type="gene ID" value="DDB_G0271524"/>
</dbReference>
<dbReference type="GeneID" id="8618015"/>
<dbReference type="KEGG" id="ddi:DDB_G0271524"/>
<dbReference type="dictyBase" id="DDB_G0271524">
    <property type="gene designation" value="pks6"/>
</dbReference>
<dbReference type="VEuPathDB" id="AmoebaDB:DDB_G0271524"/>
<dbReference type="eggNOG" id="KOG1202">
    <property type="taxonomic scope" value="Eukaryota"/>
</dbReference>
<dbReference type="eggNOG" id="KOG1221">
    <property type="taxonomic scope" value="Eukaryota"/>
</dbReference>
<dbReference type="HOGENOM" id="CLU_000022_31_0_1"/>
<dbReference type="InParanoid" id="B0G0Z9"/>
<dbReference type="PhylomeDB" id="B0G0Z9"/>
<dbReference type="PRO" id="PR:B0G0Z9"/>
<dbReference type="Proteomes" id="UP000002195">
    <property type="component" value="Chromosome 2"/>
</dbReference>
<dbReference type="GO" id="GO:0016020">
    <property type="term" value="C:membrane"/>
    <property type="evidence" value="ECO:0007669"/>
    <property type="project" value="UniProtKB-SubCell"/>
</dbReference>
<dbReference type="GO" id="GO:0004315">
    <property type="term" value="F:3-oxoacyl-[acyl-carrier-protein] synthase activity"/>
    <property type="evidence" value="ECO:0007669"/>
    <property type="project" value="InterPro"/>
</dbReference>
<dbReference type="GO" id="GO:0016491">
    <property type="term" value="F:oxidoreductase activity"/>
    <property type="evidence" value="ECO:0007669"/>
    <property type="project" value="InterPro"/>
</dbReference>
<dbReference type="GO" id="GO:0006633">
    <property type="term" value="P:fatty acid biosynthetic process"/>
    <property type="evidence" value="ECO:0000318"/>
    <property type="project" value="GO_Central"/>
</dbReference>
<dbReference type="CDD" id="cd05195">
    <property type="entry name" value="enoyl_red"/>
    <property type="match status" value="1"/>
</dbReference>
<dbReference type="CDD" id="cd08954">
    <property type="entry name" value="KR_1_FAS_SDR_x"/>
    <property type="match status" value="1"/>
</dbReference>
<dbReference type="CDD" id="cd00833">
    <property type="entry name" value="PKS"/>
    <property type="match status" value="1"/>
</dbReference>
<dbReference type="CDD" id="cd05235">
    <property type="entry name" value="SDR_e1"/>
    <property type="match status" value="1"/>
</dbReference>
<dbReference type="Gene3D" id="3.40.47.10">
    <property type="match status" value="1"/>
</dbReference>
<dbReference type="Gene3D" id="1.10.1200.10">
    <property type="entry name" value="ACP-like"/>
    <property type="match status" value="1"/>
</dbReference>
<dbReference type="Gene3D" id="3.40.366.10">
    <property type="entry name" value="Malonyl-Coenzyme A Acyl Carrier Protein, domain 2"/>
    <property type="match status" value="1"/>
</dbReference>
<dbReference type="Gene3D" id="3.90.180.10">
    <property type="entry name" value="Medium-chain alcohol dehydrogenases, catalytic domain"/>
    <property type="match status" value="1"/>
</dbReference>
<dbReference type="Gene3D" id="3.40.50.720">
    <property type="entry name" value="NAD(P)-binding Rossmann-like Domain"/>
    <property type="match status" value="3"/>
</dbReference>
<dbReference type="Gene3D" id="3.10.129.110">
    <property type="entry name" value="Polyketide synthase dehydratase"/>
    <property type="match status" value="1"/>
</dbReference>
<dbReference type="Gene3D" id="3.40.50.150">
    <property type="entry name" value="Vaccinia Virus protein VP39"/>
    <property type="match status" value="1"/>
</dbReference>
<dbReference type="InterPro" id="IPR001227">
    <property type="entry name" value="Ac_transferase_dom_sf"/>
</dbReference>
<dbReference type="InterPro" id="IPR036736">
    <property type="entry name" value="ACP-like_sf"/>
</dbReference>
<dbReference type="InterPro" id="IPR014043">
    <property type="entry name" value="Acyl_transferase_dom"/>
</dbReference>
<dbReference type="InterPro" id="IPR016035">
    <property type="entry name" value="Acyl_Trfase/lysoPLipase"/>
</dbReference>
<dbReference type="InterPro" id="IPR013154">
    <property type="entry name" value="ADH-like_N"/>
</dbReference>
<dbReference type="InterPro" id="IPR013120">
    <property type="entry name" value="Far_NAD-bd"/>
</dbReference>
<dbReference type="InterPro" id="IPR011032">
    <property type="entry name" value="GroES-like_sf"/>
</dbReference>
<dbReference type="InterPro" id="IPR018201">
    <property type="entry name" value="Ketoacyl_synth_AS"/>
</dbReference>
<dbReference type="InterPro" id="IPR014031">
    <property type="entry name" value="Ketoacyl_synth_C"/>
</dbReference>
<dbReference type="InterPro" id="IPR014030">
    <property type="entry name" value="Ketoacyl_synth_N"/>
</dbReference>
<dbReference type="InterPro" id="IPR016036">
    <property type="entry name" value="Malonyl_transacylase_ACP-bd"/>
</dbReference>
<dbReference type="InterPro" id="IPR013217">
    <property type="entry name" value="Methyltransf_12"/>
</dbReference>
<dbReference type="InterPro" id="IPR036291">
    <property type="entry name" value="NAD(P)-bd_dom_sf"/>
</dbReference>
<dbReference type="InterPro" id="IPR032821">
    <property type="entry name" value="PKS_assoc"/>
</dbReference>
<dbReference type="InterPro" id="IPR020841">
    <property type="entry name" value="PKS_Beta-ketoAc_synthase_dom"/>
</dbReference>
<dbReference type="InterPro" id="IPR042104">
    <property type="entry name" value="PKS_dehydratase_sf"/>
</dbReference>
<dbReference type="InterPro" id="IPR020843">
    <property type="entry name" value="PKS_ER"/>
</dbReference>
<dbReference type="InterPro" id="IPR013968">
    <property type="entry name" value="PKS_KR"/>
</dbReference>
<dbReference type="InterPro" id="IPR049900">
    <property type="entry name" value="PKS_mFAS_DH"/>
</dbReference>
<dbReference type="InterPro" id="IPR050444">
    <property type="entry name" value="Polyketide_Synthase"/>
</dbReference>
<dbReference type="InterPro" id="IPR009081">
    <property type="entry name" value="PP-bd_ACP"/>
</dbReference>
<dbReference type="InterPro" id="IPR029063">
    <property type="entry name" value="SAM-dependent_MTases_sf"/>
</dbReference>
<dbReference type="InterPro" id="IPR010080">
    <property type="entry name" value="Thioester_reductase-like_dom"/>
</dbReference>
<dbReference type="InterPro" id="IPR016039">
    <property type="entry name" value="Thiolase-like"/>
</dbReference>
<dbReference type="PANTHER" id="PTHR45681:SF4">
    <property type="entry name" value="BETA-KETOACYL SYNTHASE FAMILY PROTEIN-RELATED"/>
    <property type="match status" value="1"/>
</dbReference>
<dbReference type="PANTHER" id="PTHR45681">
    <property type="entry name" value="POLYKETIDE SYNTHASE 44-RELATED"/>
    <property type="match status" value="1"/>
</dbReference>
<dbReference type="Pfam" id="PF23297">
    <property type="entry name" value="ACP_SdgA_C"/>
    <property type="match status" value="1"/>
</dbReference>
<dbReference type="Pfam" id="PF00698">
    <property type="entry name" value="Acyl_transf_1"/>
    <property type="match status" value="1"/>
</dbReference>
<dbReference type="Pfam" id="PF08240">
    <property type="entry name" value="ADH_N"/>
    <property type="match status" value="1"/>
</dbReference>
<dbReference type="Pfam" id="PF16197">
    <property type="entry name" value="KAsynt_C_assoc"/>
    <property type="match status" value="1"/>
</dbReference>
<dbReference type="Pfam" id="PF00109">
    <property type="entry name" value="ketoacyl-synt"/>
    <property type="match status" value="1"/>
</dbReference>
<dbReference type="Pfam" id="PF02801">
    <property type="entry name" value="Ketoacyl-synt_C"/>
    <property type="match status" value="1"/>
</dbReference>
<dbReference type="Pfam" id="PF08659">
    <property type="entry name" value="KR"/>
    <property type="match status" value="1"/>
</dbReference>
<dbReference type="Pfam" id="PF08242">
    <property type="entry name" value="Methyltransf_12"/>
    <property type="match status" value="1"/>
</dbReference>
<dbReference type="Pfam" id="PF07993">
    <property type="entry name" value="NAD_binding_4"/>
    <property type="match status" value="1"/>
</dbReference>
<dbReference type="SMART" id="SM00827">
    <property type="entry name" value="PKS_AT"/>
    <property type="match status" value="1"/>
</dbReference>
<dbReference type="SMART" id="SM00829">
    <property type="entry name" value="PKS_ER"/>
    <property type="match status" value="1"/>
</dbReference>
<dbReference type="SMART" id="SM00822">
    <property type="entry name" value="PKS_KR"/>
    <property type="match status" value="1"/>
</dbReference>
<dbReference type="SMART" id="SM00825">
    <property type="entry name" value="PKS_KS"/>
    <property type="match status" value="1"/>
</dbReference>
<dbReference type="SUPFAM" id="SSF47336">
    <property type="entry name" value="ACP-like"/>
    <property type="match status" value="1"/>
</dbReference>
<dbReference type="SUPFAM" id="SSF52151">
    <property type="entry name" value="FabD/lysophospholipase-like"/>
    <property type="match status" value="1"/>
</dbReference>
<dbReference type="SUPFAM" id="SSF50129">
    <property type="entry name" value="GroES-like"/>
    <property type="match status" value="1"/>
</dbReference>
<dbReference type="SUPFAM" id="SSF51735">
    <property type="entry name" value="NAD(P)-binding Rossmann-fold domains"/>
    <property type="match status" value="3"/>
</dbReference>
<dbReference type="SUPFAM" id="SSF55048">
    <property type="entry name" value="Probable ACP-binding domain of malonyl-CoA ACP transacylase"/>
    <property type="match status" value="1"/>
</dbReference>
<dbReference type="SUPFAM" id="SSF53335">
    <property type="entry name" value="S-adenosyl-L-methionine-dependent methyltransferases"/>
    <property type="match status" value="1"/>
</dbReference>
<dbReference type="SUPFAM" id="SSF53901">
    <property type="entry name" value="Thiolase-like"/>
    <property type="match status" value="1"/>
</dbReference>
<dbReference type="PROSITE" id="PS50075">
    <property type="entry name" value="CARRIER"/>
    <property type="match status" value="1"/>
</dbReference>
<dbReference type="PROSITE" id="PS00606">
    <property type="entry name" value="KS3_1"/>
    <property type="match status" value="1"/>
</dbReference>
<dbReference type="PROSITE" id="PS52004">
    <property type="entry name" value="KS3_2"/>
    <property type="match status" value="1"/>
</dbReference>
<dbReference type="PROSITE" id="PS52019">
    <property type="entry name" value="PKS_MFAS_DH"/>
    <property type="match status" value="1"/>
</dbReference>
<comment type="function">
    <text evidence="1">Probable polyketide synthase.</text>
</comment>
<comment type="cofactor">
    <cofactor evidence="1">
        <name>pantetheine 4'-phosphate</name>
        <dbReference type="ChEBI" id="CHEBI:47942"/>
    </cofactor>
    <text evidence="1">Binds 1 phosphopantetheine covalently.</text>
</comment>
<comment type="subcellular location">
    <subcellularLocation>
        <location evidence="7">Membrane</location>
        <topology evidence="7">Single-pass membrane protein</topology>
    </subcellularLocation>
</comment>
<comment type="domain">
    <text evidence="1">Modular protein that is responsible for the completion of one condensation-processing cycle. The beta-ketoacyl synthase region is responsible for the actual condensation reaction while the acyl/malonyl transferase region is responsible for incorporating carboxylic acids units onto an acyl carrier protein (ACP) domain (By similarity).</text>
</comment>
<comment type="miscellaneous">
    <text>Encoded by one of the numerous copies of polyketide synthase genes and clustered as a quintuplet pks5/pks6/pks7/pks8/pks9 in chromosome 2.</text>
</comment>
<gene>
    <name type="primary">pks6</name>
    <name type="ORF">DDB_G0271524</name>
</gene>